<feature type="chain" id="PRO_0000403055" description="3-hydroxypropionyl-coenzyme A synthetase">
    <location>
        <begin position="1"/>
        <end position="659"/>
    </location>
</feature>
<feature type="active site" evidence="1">
    <location>
        <position position="525"/>
    </location>
</feature>
<feature type="modified residue" description="N6-acetyllysine" evidence="1">
    <location>
        <position position="616"/>
    </location>
</feature>
<feature type="sequence conflict" description="In Ref. 1; ACJ71674." evidence="5" ref="1">
    <original>I</original>
    <variation>L</variation>
    <location>
        <position position="518"/>
    </location>
</feature>
<name>HPCAS_SULTO</name>
<sequence length="659" mass="74106">MTEKLSEQLQQLGEQNLEEKADYNMRYYKYLYKKSIEEPDKFWGELAEELITWYEPWKQAFVQEEGLLTKWFVGGKLNASYNAVDRHLNSHRKYKAAIFWESEKGEKKVVTYQDLFYEVNKWANALRELGVKKGDRVTIYMPLTPEGVIAKLAVARLGAIHSVVFAGFGAQALADRIADAGAKVVITADAYYRRGKLVELKKTVDEALNILGDKSPVQKVLVYKRTGTEIPFKEGRDVYFDEVGKYKYIEPVPVEATEPLFILYTSGTTGKPKGIVHSTGGYLVGTAVMLLWSYGLSQENDVLFNTSDIGWIVGHSYITYSPLVMGRSIVIYESAPDYPYPDKWAEMIEKYRATTFGTSATAIRTLMKYGEDYVKQHDLSSLRIIVTNGEPLNYAPWKWGLEVVGGGKVFMSHQWWQTETGGPNIGYIPGVVYLPMKSGPAVGFALPGNKVTVVNEEGKETKPRERGYLVMLPPFPPMMMIGMWNDPDNERLKKTYFSKFPGIYYPGDYAMIDEDGYIWVMGRADETIKVAAHRIGAGEVESIVTSHPAVAEAAAVGIPDPVKGEAVHLFVVLKVGYKPSPQLAREIQEHVRKYMGAIVTPEVHFVDKLPKTRSGKIMRRVIKAVMMGQSAGDITTLEDEASMDEIKKAVEEFKKSLSQ</sequence>
<keyword id="KW-0007">Acetylation</keyword>
<keyword id="KW-0067">ATP-binding</keyword>
<keyword id="KW-0436">Ligase</keyword>
<keyword id="KW-0547">Nucleotide-binding</keyword>
<keyword id="KW-1185">Reference proteome</keyword>
<protein>
    <recommendedName>
        <fullName evidence="4">3-hydroxypropionyl-coenzyme A synthetase</fullName>
        <shortName evidence="6">3-hydroxypropionyl-CoA synthetase</shortName>
        <ecNumber>6.2.1.36</ecNumber>
    </recommendedName>
</protein>
<evidence type="ECO:0000250" key="1">
    <source>
        <dbReference type="UniProtKB" id="Q8ZKF6"/>
    </source>
</evidence>
<evidence type="ECO:0000255" key="2"/>
<evidence type="ECO:0000269" key="3">
    <source>
    </source>
</evidence>
<evidence type="ECO:0000303" key="4">
    <source>
    </source>
</evidence>
<evidence type="ECO:0000305" key="5"/>
<evidence type="ECO:0000312" key="6">
    <source>
        <dbReference type="EMBL" id="ACJ71674.1"/>
    </source>
</evidence>
<evidence type="ECO:0000312" key="7">
    <source>
        <dbReference type="EMBL" id="BAB65795.1"/>
    </source>
</evidence>
<reference evidence="5 6" key="1">
    <citation type="journal article" date="2008" name="J. Bacteriol.">
        <title>3-Hydroxypropionyl-coenzyme A synthetase from Metallosphaera sedula, an enzyme involved in autotrophic CO2 fixation.</title>
        <authorList>
            <person name="Alber B.E."/>
            <person name="Kung J.W."/>
            <person name="Fuchs G."/>
        </authorList>
    </citation>
    <scope>NUCLEOTIDE SEQUENCE [GENOMIC DNA]</scope>
    <scope>FUNCTION</scope>
    <scope>CATALYTIC ACTIVITY</scope>
    <scope>BIOPHYSICOCHEMICAL PROPERTIES</scope>
</reference>
<reference evidence="7" key="2">
    <citation type="journal article" date="2001" name="DNA Res.">
        <title>Complete genome sequence of an aerobic thermoacidophilic Crenarchaeon, Sulfolobus tokodaii strain7.</title>
        <authorList>
            <person name="Kawarabayasi Y."/>
            <person name="Hino Y."/>
            <person name="Horikawa H."/>
            <person name="Jin-no K."/>
            <person name="Takahashi M."/>
            <person name="Sekine M."/>
            <person name="Baba S."/>
            <person name="Ankai A."/>
            <person name="Kosugi H."/>
            <person name="Hosoyama A."/>
            <person name="Fukui S."/>
            <person name="Nagai Y."/>
            <person name="Nishijima K."/>
            <person name="Otsuka R."/>
            <person name="Nakazawa H."/>
            <person name="Takamiya M."/>
            <person name="Kato Y."/>
            <person name="Yoshizawa T."/>
            <person name="Tanaka T."/>
            <person name="Kudoh Y."/>
            <person name="Yamazaki J."/>
            <person name="Kushida N."/>
            <person name="Oguchi A."/>
            <person name="Aoki K."/>
            <person name="Masuda S."/>
            <person name="Yanagii M."/>
            <person name="Nishimura M."/>
            <person name="Yamagishi A."/>
            <person name="Oshima T."/>
            <person name="Kikuchi H."/>
        </authorList>
    </citation>
    <scope>NUCLEOTIDE SEQUENCE [LARGE SCALE GENOMIC DNA]</scope>
    <source>
        <strain>DSM 16993 / JCM 10545 / NBRC 100140 / 7</strain>
    </source>
</reference>
<comment type="function">
    <text evidence="3">Plays a role in the autotrophic CO(2) fixation pathway. Activates 3-hydroxypropionate to its CoA ester. Can also activate propionate, and to a lesser extent acrylate, acetate and butyrate.</text>
</comment>
<comment type="catalytic activity">
    <reaction evidence="3">
        <text>3-hydroxypropanoate + ATP + CoA = 3-hydroxypropanoyl-CoA + AMP + diphosphate</text>
        <dbReference type="Rhea" id="RHEA:26534"/>
        <dbReference type="ChEBI" id="CHEBI:16510"/>
        <dbReference type="ChEBI" id="CHEBI:30616"/>
        <dbReference type="ChEBI" id="CHEBI:33019"/>
        <dbReference type="ChEBI" id="CHEBI:57287"/>
        <dbReference type="ChEBI" id="CHEBI:58528"/>
        <dbReference type="ChEBI" id="CHEBI:456215"/>
        <dbReference type="EC" id="6.2.1.36"/>
    </reaction>
</comment>
<comment type="biophysicochemical properties">
    <kinetics>
        <KM evidence="3">190 uM for 3-hydroxypropionate</KM>
        <KM evidence="3">110 uM for ATP</KM>
    </kinetics>
</comment>
<comment type="similarity">
    <text evidence="2">Belongs to the ATP-dependent AMP-binding enzyme family.</text>
</comment>
<organism>
    <name type="scientific">Sulfurisphaera tokodaii (strain DSM 16993 / JCM 10545 / NBRC 100140 / 7)</name>
    <name type="common">Sulfolobus tokodaii</name>
    <dbReference type="NCBI Taxonomy" id="273063"/>
    <lineage>
        <taxon>Archaea</taxon>
        <taxon>Thermoproteota</taxon>
        <taxon>Thermoprotei</taxon>
        <taxon>Sulfolobales</taxon>
        <taxon>Sulfolobaceae</taxon>
        <taxon>Sulfurisphaera</taxon>
    </lineage>
</organism>
<proteinExistence type="evidence at protein level"/>
<accession>Q973W5</accession>
<accession>B8XVT0</accession>
<dbReference type="EC" id="6.2.1.36"/>
<dbReference type="EMBL" id="FJ445416">
    <property type="protein sequence ID" value="ACJ71674.1"/>
    <property type="molecule type" value="Genomic_DNA"/>
</dbReference>
<dbReference type="EMBL" id="BA000023">
    <property type="protein sequence ID" value="BAB65795.1"/>
    <property type="molecule type" value="Genomic_DNA"/>
</dbReference>
<dbReference type="RefSeq" id="WP_010978778.1">
    <property type="nucleotide sequence ID" value="NC_003106.2"/>
</dbReference>
<dbReference type="SMR" id="Q973W5"/>
<dbReference type="STRING" id="273063.STK_07830"/>
<dbReference type="GeneID" id="1458745"/>
<dbReference type="KEGG" id="sto:STK_07830"/>
<dbReference type="PATRIC" id="fig|273063.9.peg.881"/>
<dbReference type="eggNOG" id="arCOG01529">
    <property type="taxonomic scope" value="Archaea"/>
</dbReference>
<dbReference type="OrthoDB" id="371752at2157"/>
<dbReference type="BRENDA" id="6.2.1.36">
    <property type="organism ID" value="15396"/>
</dbReference>
<dbReference type="SABIO-RK" id="Q973W5"/>
<dbReference type="Proteomes" id="UP000001015">
    <property type="component" value="Chromosome"/>
</dbReference>
<dbReference type="GO" id="GO:0043955">
    <property type="term" value="F:3-hydroxypropionyl-CoA synthetase activity"/>
    <property type="evidence" value="ECO:0000314"/>
    <property type="project" value="UniProtKB"/>
</dbReference>
<dbReference type="GO" id="GO:0003987">
    <property type="term" value="F:acetate-CoA ligase activity"/>
    <property type="evidence" value="ECO:0007669"/>
    <property type="project" value="InterPro"/>
</dbReference>
<dbReference type="GO" id="GO:0016208">
    <property type="term" value="F:AMP binding"/>
    <property type="evidence" value="ECO:0007669"/>
    <property type="project" value="InterPro"/>
</dbReference>
<dbReference type="GO" id="GO:0005524">
    <property type="term" value="F:ATP binding"/>
    <property type="evidence" value="ECO:0007669"/>
    <property type="project" value="UniProtKB-KW"/>
</dbReference>
<dbReference type="GO" id="GO:0019427">
    <property type="term" value="P:acetyl-CoA biosynthetic process from acetate"/>
    <property type="evidence" value="ECO:0007669"/>
    <property type="project" value="InterPro"/>
</dbReference>
<dbReference type="GO" id="GO:0043427">
    <property type="term" value="P:carbon fixation by 3-hydroxypropionate cycle"/>
    <property type="evidence" value="ECO:0000314"/>
    <property type="project" value="UniProtKB"/>
</dbReference>
<dbReference type="FunFam" id="3.40.50.12780:FF:000001">
    <property type="entry name" value="Acetyl-coenzyme A synthetase"/>
    <property type="match status" value="1"/>
</dbReference>
<dbReference type="Gene3D" id="3.30.300.30">
    <property type="match status" value="1"/>
</dbReference>
<dbReference type="Gene3D" id="3.40.50.12780">
    <property type="entry name" value="N-terminal domain of ligase-like"/>
    <property type="match status" value="1"/>
</dbReference>
<dbReference type="InterPro" id="IPR011904">
    <property type="entry name" value="Ac_CoA_lig"/>
</dbReference>
<dbReference type="InterPro" id="IPR032387">
    <property type="entry name" value="ACAS_N"/>
</dbReference>
<dbReference type="InterPro" id="IPR025110">
    <property type="entry name" value="AMP-bd_C"/>
</dbReference>
<dbReference type="InterPro" id="IPR045851">
    <property type="entry name" value="AMP-bd_C_sf"/>
</dbReference>
<dbReference type="InterPro" id="IPR020845">
    <property type="entry name" value="AMP-binding_CS"/>
</dbReference>
<dbReference type="InterPro" id="IPR000873">
    <property type="entry name" value="AMP-dep_synth/lig_dom"/>
</dbReference>
<dbReference type="InterPro" id="IPR042099">
    <property type="entry name" value="ANL_N_sf"/>
</dbReference>
<dbReference type="NCBIfam" id="TIGR02188">
    <property type="entry name" value="Ac_CoA_lig_AcsA"/>
    <property type="match status" value="1"/>
</dbReference>
<dbReference type="NCBIfam" id="NF001208">
    <property type="entry name" value="PRK00174.1"/>
    <property type="match status" value="1"/>
</dbReference>
<dbReference type="PANTHER" id="PTHR24095">
    <property type="entry name" value="ACETYL-COENZYME A SYNTHETASE"/>
    <property type="match status" value="1"/>
</dbReference>
<dbReference type="PANTHER" id="PTHR24095:SF232">
    <property type="entry name" value="ACETYL-COENZYME A SYNTHETASE"/>
    <property type="match status" value="1"/>
</dbReference>
<dbReference type="Pfam" id="PF16177">
    <property type="entry name" value="ACAS_N"/>
    <property type="match status" value="1"/>
</dbReference>
<dbReference type="Pfam" id="PF00501">
    <property type="entry name" value="AMP-binding"/>
    <property type="match status" value="1"/>
</dbReference>
<dbReference type="Pfam" id="PF13193">
    <property type="entry name" value="AMP-binding_C"/>
    <property type="match status" value="1"/>
</dbReference>
<dbReference type="SUPFAM" id="SSF56801">
    <property type="entry name" value="Acetyl-CoA synthetase-like"/>
    <property type="match status" value="1"/>
</dbReference>
<dbReference type="PROSITE" id="PS00455">
    <property type="entry name" value="AMP_BINDING"/>
    <property type="match status" value="1"/>
</dbReference>
<gene>
    <name type="ordered locus">STK_07830</name>
</gene>